<keyword id="KW-0067">ATP-binding</keyword>
<keyword id="KW-0256">Endoplasmic reticulum</keyword>
<keyword id="KW-0418">Kinase</keyword>
<keyword id="KW-0472">Membrane</keyword>
<keyword id="KW-0547">Nucleotide-binding</keyword>
<keyword id="KW-1185">Reference proteome</keyword>
<keyword id="KW-0735">Signal-anchor</keyword>
<keyword id="KW-0808">Transferase</keyword>
<keyword id="KW-0812">Transmembrane</keyword>
<keyword id="KW-1133">Transmembrane helix</keyword>
<evidence type="ECO:0000250" key="1"/>
<evidence type="ECO:0000255" key="2"/>
<evidence type="ECO:0000255" key="3">
    <source>
        <dbReference type="PROSITE-ProRule" id="PRU00159"/>
    </source>
</evidence>
<evidence type="ECO:0000305" key="4"/>
<organism>
    <name type="scientific">Xenopus laevis</name>
    <name type="common">African clawed frog</name>
    <dbReference type="NCBI Taxonomy" id="8355"/>
    <lineage>
        <taxon>Eukaryota</taxon>
        <taxon>Metazoa</taxon>
        <taxon>Chordata</taxon>
        <taxon>Craniata</taxon>
        <taxon>Vertebrata</taxon>
        <taxon>Euteleostomi</taxon>
        <taxon>Amphibia</taxon>
        <taxon>Batrachia</taxon>
        <taxon>Anura</taxon>
        <taxon>Pipoidea</taxon>
        <taxon>Pipidae</taxon>
        <taxon>Xenopodinae</taxon>
        <taxon>Xenopus</taxon>
        <taxon>Xenopus</taxon>
    </lineage>
</organism>
<comment type="function">
    <text evidence="1">Protein O-mannose kinase that specifically mediates phosphorylation at the 6-position of an O-mannose of the trisaccharide (N-acetylgalactosamine (GalNAc)-beta-1,3-N-acetylglucosamine (GlcNAc)-beta-1,4-mannose) to generate phosphorylated O-mannosyl trisaccharide (N-acetylgalactosamine-beta-1,3-N-acetylglucosamine-beta-1,4-(phosphate-6-)mannose). Phosphorylated O-mannosyl trisaccharide is a carbohydrate structure present in alpha-dystroglycan (dag1), which is required for binding laminin G-like domain-containing extracellular proteins with high affinity. Only shows kinase activity when the GalNAc-beta-3-GlcNAc-beta-terminus is linked to the 4-position of O-mannose, suggesting that this disaccharide serves as the substrate recognition motif (By similarity).</text>
</comment>
<comment type="catalytic activity">
    <reaction>
        <text>3-O-[beta-D-GalNAc-(1-&gt;3)-beta-D-GlcNAc-(1-&gt;4)-alpha-D-Man]-L-Thr-[protein] + ATP = 3-O-[beta-D-GalNAc-(1-&gt;3)-beta-D-GlcNAc-(1-&gt;4)-(O-6-P-alpha-D-Man)]-Thr-[protein] + ADP + H(+)</text>
        <dbReference type="Rhea" id="RHEA:52616"/>
        <dbReference type="Rhea" id="RHEA-COMP:13308"/>
        <dbReference type="Rhea" id="RHEA-COMP:13309"/>
        <dbReference type="ChEBI" id="CHEBI:15378"/>
        <dbReference type="ChEBI" id="CHEBI:30616"/>
        <dbReference type="ChEBI" id="CHEBI:136709"/>
        <dbReference type="ChEBI" id="CHEBI:136710"/>
        <dbReference type="ChEBI" id="CHEBI:456216"/>
        <dbReference type="EC" id="2.7.1.183"/>
    </reaction>
</comment>
<comment type="subcellular location">
    <subcellularLocation>
        <location evidence="1">Endoplasmic reticulum membrane</location>
        <topology evidence="1">Single-pass type II membrane protein</topology>
    </subcellularLocation>
</comment>
<comment type="similarity">
    <text evidence="3">Belongs to the protein kinase superfamily. Ser/Thr protein kinase family. STKL subfamily.</text>
</comment>
<comment type="caution">
    <text evidence="4">Although related to the Ser/Thr protein kinase family, has no protein kinase activity and acts as a mannose kinase instead.</text>
</comment>
<dbReference type="EC" id="2.7.1.183"/>
<dbReference type="EMBL" id="BC088934">
    <property type="protein sequence ID" value="AAH88934.1"/>
    <property type="molecule type" value="mRNA"/>
</dbReference>
<dbReference type="RefSeq" id="NP_001088958.1">
    <property type="nucleotide sequence ID" value="NM_001095489.1"/>
</dbReference>
<dbReference type="RefSeq" id="XP_018104678.1">
    <property type="nucleotide sequence ID" value="XM_018249189.1"/>
</dbReference>
<dbReference type="SMR" id="Q5HZP7"/>
<dbReference type="DNASU" id="496338"/>
<dbReference type="GeneID" id="496338"/>
<dbReference type="KEGG" id="xla:496338"/>
<dbReference type="AGR" id="Xenbase:XB-GENE-984410"/>
<dbReference type="CTD" id="496338"/>
<dbReference type="Xenbase" id="XB-GENE-984410">
    <property type="gene designation" value="pomk.L"/>
</dbReference>
<dbReference type="OMA" id="NTWHRRL"/>
<dbReference type="OrthoDB" id="4062651at2759"/>
<dbReference type="Proteomes" id="UP000186698">
    <property type="component" value="Chromosome 1L"/>
</dbReference>
<dbReference type="Bgee" id="496338">
    <property type="expression patterns" value="Expressed in egg cell and 19 other cell types or tissues"/>
</dbReference>
<dbReference type="GO" id="GO:0005789">
    <property type="term" value="C:endoplasmic reticulum membrane"/>
    <property type="evidence" value="ECO:0000318"/>
    <property type="project" value="GO_Central"/>
</dbReference>
<dbReference type="GO" id="GO:0005524">
    <property type="term" value="F:ATP binding"/>
    <property type="evidence" value="ECO:0007669"/>
    <property type="project" value="UniProtKB-KW"/>
</dbReference>
<dbReference type="GO" id="GO:0019200">
    <property type="term" value="F:carbohydrate kinase activity"/>
    <property type="evidence" value="ECO:0000318"/>
    <property type="project" value="GO_Central"/>
</dbReference>
<dbReference type="GO" id="GO:0016773">
    <property type="term" value="F:phosphotransferase activity, alcohol group as acceptor"/>
    <property type="evidence" value="ECO:0000250"/>
    <property type="project" value="UniProtKB"/>
</dbReference>
<dbReference type="GO" id="GO:0004672">
    <property type="term" value="F:protein kinase activity"/>
    <property type="evidence" value="ECO:0007669"/>
    <property type="project" value="InterPro"/>
</dbReference>
<dbReference type="GO" id="GO:0046835">
    <property type="term" value="P:carbohydrate phosphorylation"/>
    <property type="evidence" value="ECO:0000250"/>
    <property type="project" value="UniProtKB"/>
</dbReference>
<dbReference type="GO" id="GO:0006493">
    <property type="term" value="P:protein O-linked glycosylation"/>
    <property type="evidence" value="ECO:0000250"/>
    <property type="project" value="UniProtKB"/>
</dbReference>
<dbReference type="FunFam" id="1.10.510.10:FF:000464">
    <property type="entry name" value="Protein O-mannose kinase"/>
    <property type="match status" value="1"/>
</dbReference>
<dbReference type="Gene3D" id="1.10.510.10">
    <property type="entry name" value="Transferase(Phosphotransferase) domain 1"/>
    <property type="match status" value="1"/>
</dbReference>
<dbReference type="InterPro" id="IPR011009">
    <property type="entry name" value="Kinase-like_dom_sf"/>
</dbReference>
<dbReference type="InterPro" id="IPR039318">
    <property type="entry name" value="POMK"/>
</dbReference>
<dbReference type="InterPro" id="IPR000719">
    <property type="entry name" value="Prot_kinase_dom"/>
</dbReference>
<dbReference type="InterPro" id="IPR001245">
    <property type="entry name" value="Ser-Thr/Tyr_kinase_cat_dom"/>
</dbReference>
<dbReference type="PANTHER" id="PTHR22618">
    <property type="entry name" value="PROTEIN O-MANNOSE KINASE"/>
    <property type="match status" value="1"/>
</dbReference>
<dbReference type="PANTHER" id="PTHR22618:SF2">
    <property type="entry name" value="PROTEIN O-MANNOSE KINASE"/>
    <property type="match status" value="1"/>
</dbReference>
<dbReference type="Pfam" id="PF07714">
    <property type="entry name" value="PK_Tyr_Ser-Thr"/>
    <property type="match status" value="1"/>
</dbReference>
<dbReference type="SMART" id="SM00220">
    <property type="entry name" value="S_TKc"/>
    <property type="match status" value="1"/>
</dbReference>
<dbReference type="SUPFAM" id="SSF56112">
    <property type="entry name" value="Protein kinase-like (PK-like)"/>
    <property type="match status" value="1"/>
</dbReference>
<dbReference type="PROSITE" id="PS50011">
    <property type="entry name" value="PROTEIN_KINASE_DOM"/>
    <property type="match status" value="1"/>
</dbReference>
<feature type="chain" id="PRO_0000263002" description="Protein O-mannose kinase">
    <location>
        <begin position="1"/>
        <end position="352"/>
    </location>
</feature>
<feature type="topological domain" description="Cytoplasmic" evidence="2">
    <location>
        <begin position="1"/>
        <end position="16"/>
    </location>
</feature>
<feature type="transmembrane region" description="Helical; Signal-anchor for type II membrane protein" evidence="2">
    <location>
        <begin position="17"/>
        <end position="37"/>
    </location>
</feature>
<feature type="topological domain" description="Lumenal" evidence="2">
    <location>
        <begin position="38"/>
        <end position="352"/>
    </location>
</feature>
<feature type="domain" description="Protein kinase" evidence="3">
    <location>
        <begin position="82"/>
        <end position="352"/>
    </location>
</feature>
<reference key="1">
    <citation type="submission" date="2005-01" db="EMBL/GenBank/DDBJ databases">
        <authorList>
            <consortium name="NIH - Xenopus Gene Collection (XGC) project"/>
        </authorList>
    </citation>
    <scope>NUCLEOTIDE SEQUENCE [LARGE SCALE MRNA]</scope>
    <source>
        <tissue>Egg</tissue>
    </source>
</reference>
<sequence length="352" mass="40314">MERKPSVCRKSGSWNCLLVLFLLLLFTVVSVNFLLYMYIDQMYAPSRFSHSEVNLCPYGHFKIATIKNCSPWLTCETIKKEVRKLKLVGEGAVKKVFLSEWKGLKVALSELKSLDLQDDFLHGLRMLQSMQSRYVVVLVGYCKETFSILTEYHPLGSLKDLDETFSFPKYQGFNTWQNRLKLAIEYVSIINYLHNSPHGTLIMCDSNDLDKALSQYMLTSDFHVVANDLDALPVVDKEKGILVKCGQREITGHFVAPEQLWPYGPNIEFSDDLMPSYDEKTDIWKIPAVIDHLLGHVKGSDIVRFHLFDIHSECGKANPSERPSAQMVLDTYRKVLALLMKEMAVAETREML</sequence>
<gene>
    <name type="primary">pomk</name>
    <name type="synonym">sgk196</name>
</gene>
<accession>Q5HZP7</accession>
<proteinExistence type="evidence at transcript level"/>
<protein>
    <recommendedName>
        <fullName>Protein O-mannose kinase</fullName>
        <shortName>POMK</shortName>
        <ecNumber>2.7.1.183</ecNumber>
    </recommendedName>
    <alternativeName>
        <fullName>Protein kinase-like protein SgK196</fullName>
    </alternativeName>
    <alternativeName>
        <fullName>Sugen kinase 196</fullName>
    </alternativeName>
</protein>
<name>SG196_XENLA</name>